<comment type="function">
    <text evidence="1">Catalyzes the reversible phosphorylation of UMP to UDP.</text>
</comment>
<comment type="catalytic activity">
    <reaction evidence="1">
        <text>UMP + ATP = UDP + ADP</text>
        <dbReference type="Rhea" id="RHEA:24400"/>
        <dbReference type="ChEBI" id="CHEBI:30616"/>
        <dbReference type="ChEBI" id="CHEBI:57865"/>
        <dbReference type="ChEBI" id="CHEBI:58223"/>
        <dbReference type="ChEBI" id="CHEBI:456216"/>
        <dbReference type="EC" id="2.7.4.22"/>
    </reaction>
</comment>
<comment type="activity regulation">
    <text evidence="1">Allosterically activated by GTP. Inhibited by UTP.</text>
</comment>
<comment type="pathway">
    <text evidence="1">Pyrimidine metabolism; CTP biosynthesis via de novo pathway; UDP from UMP (UMPK route): step 1/1.</text>
</comment>
<comment type="subunit">
    <text evidence="1">Homohexamer.</text>
</comment>
<comment type="subcellular location">
    <subcellularLocation>
        <location evidence="1">Cytoplasm</location>
    </subcellularLocation>
</comment>
<comment type="similarity">
    <text evidence="1">Belongs to the UMP kinase family.</text>
</comment>
<proteinExistence type="inferred from homology"/>
<sequence length="237" mass="25757">MGTCKYKRVMLKLSGEALAGENGFGIDFNIAMNIAKAVKELVDMGIEVGAVVGGGNIWRGRSGEGMDRTTADYMGMLATSINALALQDSLESLGVDTRVQTAIEMKEIAEPYIRRRAMRHLEKGRVVIFGAGTGNPYFSTDTAAALRAAEIEADVILLAKKVDGVYDKDPHKYDDAKKYDELSYIEVLEQGLQVMDSTATSLCMDNNIPILVFALDNPENIKKVVLGENIGTIVSKK</sequence>
<reference key="1">
    <citation type="journal article" date="2006" name="Genome Res.">
        <title>Skewed genomic variability in strains of the toxigenic bacterial pathogen, Clostridium perfringens.</title>
        <authorList>
            <person name="Myers G.S.A."/>
            <person name="Rasko D.A."/>
            <person name="Cheung J.K."/>
            <person name="Ravel J."/>
            <person name="Seshadri R."/>
            <person name="DeBoy R.T."/>
            <person name="Ren Q."/>
            <person name="Varga J."/>
            <person name="Awad M.M."/>
            <person name="Brinkac L.M."/>
            <person name="Daugherty S.C."/>
            <person name="Haft D.H."/>
            <person name="Dodson R.J."/>
            <person name="Madupu R."/>
            <person name="Nelson W.C."/>
            <person name="Rosovitz M.J."/>
            <person name="Sullivan S.A."/>
            <person name="Khouri H."/>
            <person name="Dimitrov G.I."/>
            <person name="Watkins K.L."/>
            <person name="Mulligan S."/>
            <person name="Benton J."/>
            <person name="Radune D."/>
            <person name="Fisher D.J."/>
            <person name="Atkins H.S."/>
            <person name="Hiscox T."/>
            <person name="Jost B.H."/>
            <person name="Billington S.J."/>
            <person name="Songer J.G."/>
            <person name="McClane B.A."/>
            <person name="Titball R.W."/>
            <person name="Rood J.I."/>
            <person name="Melville S.B."/>
            <person name="Paulsen I.T."/>
        </authorList>
    </citation>
    <scope>NUCLEOTIDE SEQUENCE [LARGE SCALE GENOMIC DNA]</scope>
    <source>
        <strain>SM101 / Type A</strain>
    </source>
</reference>
<accession>Q0SSC2</accession>
<protein>
    <recommendedName>
        <fullName evidence="1">Uridylate kinase</fullName>
        <shortName evidence="1">UK</shortName>
        <ecNumber evidence="1">2.7.4.22</ecNumber>
    </recommendedName>
    <alternativeName>
        <fullName evidence="1">Uridine monophosphate kinase</fullName>
        <shortName evidence="1">UMP kinase</shortName>
        <shortName evidence="1">UMPK</shortName>
    </alternativeName>
</protein>
<dbReference type="EC" id="2.7.4.22" evidence="1"/>
<dbReference type="EMBL" id="CP000312">
    <property type="protein sequence ID" value="ABG85887.1"/>
    <property type="molecule type" value="Genomic_DNA"/>
</dbReference>
<dbReference type="RefSeq" id="WP_011592598.1">
    <property type="nucleotide sequence ID" value="NC_008262.1"/>
</dbReference>
<dbReference type="SMR" id="Q0SSC2"/>
<dbReference type="KEGG" id="cpr:CPR_1670"/>
<dbReference type="UniPathway" id="UPA00159">
    <property type="reaction ID" value="UER00275"/>
</dbReference>
<dbReference type="Proteomes" id="UP000001824">
    <property type="component" value="Chromosome"/>
</dbReference>
<dbReference type="GO" id="GO:0005737">
    <property type="term" value="C:cytoplasm"/>
    <property type="evidence" value="ECO:0007669"/>
    <property type="project" value="UniProtKB-SubCell"/>
</dbReference>
<dbReference type="GO" id="GO:0005524">
    <property type="term" value="F:ATP binding"/>
    <property type="evidence" value="ECO:0007669"/>
    <property type="project" value="UniProtKB-KW"/>
</dbReference>
<dbReference type="GO" id="GO:0033862">
    <property type="term" value="F:UMP kinase activity"/>
    <property type="evidence" value="ECO:0007669"/>
    <property type="project" value="UniProtKB-EC"/>
</dbReference>
<dbReference type="GO" id="GO:0044210">
    <property type="term" value="P:'de novo' CTP biosynthetic process"/>
    <property type="evidence" value="ECO:0007669"/>
    <property type="project" value="UniProtKB-UniRule"/>
</dbReference>
<dbReference type="GO" id="GO:0006225">
    <property type="term" value="P:UDP biosynthetic process"/>
    <property type="evidence" value="ECO:0007669"/>
    <property type="project" value="TreeGrafter"/>
</dbReference>
<dbReference type="CDD" id="cd04254">
    <property type="entry name" value="AAK_UMPK-PyrH-Ec"/>
    <property type="match status" value="1"/>
</dbReference>
<dbReference type="FunFam" id="3.40.1160.10:FF:000001">
    <property type="entry name" value="Uridylate kinase"/>
    <property type="match status" value="1"/>
</dbReference>
<dbReference type="Gene3D" id="3.40.1160.10">
    <property type="entry name" value="Acetylglutamate kinase-like"/>
    <property type="match status" value="1"/>
</dbReference>
<dbReference type="HAMAP" id="MF_01220_B">
    <property type="entry name" value="PyrH_B"/>
    <property type="match status" value="1"/>
</dbReference>
<dbReference type="InterPro" id="IPR036393">
    <property type="entry name" value="AceGlu_kinase-like_sf"/>
</dbReference>
<dbReference type="InterPro" id="IPR001048">
    <property type="entry name" value="Asp/Glu/Uridylate_kinase"/>
</dbReference>
<dbReference type="InterPro" id="IPR001057">
    <property type="entry name" value="Glu/AcGlu_kinase"/>
</dbReference>
<dbReference type="InterPro" id="IPR011817">
    <property type="entry name" value="Uridylate_kinase"/>
</dbReference>
<dbReference type="InterPro" id="IPR015963">
    <property type="entry name" value="Uridylate_kinase_bac"/>
</dbReference>
<dbReference type="NCBIfam" id="TIGR02075">
    <property type="entry name" value="pyrH_bact"/>
    <property type="match status" value="1"/>
</dbReference>
<dbReference type="PANTHER" id="PTHR42833">
    <property type="entry name" value="URIDYLATE KINASE"/>
    <property type="match status" value="1"/>
</dbReference>
<dbReference type="PANTHER" id="PTHR42833:SF4">
    <property type="entry name" value="URIDYLATE KINASE PUMPKIN, CHLOROPLASTIC"/>
    <property type="match status" value="1"/>
</dbReference>
<dbReference type="Pfam" id="PF00696">
    <property type="entry name" value="AA_kinase"/>
    <property type="match status" value="1"/>
</dbReference>
<dbReference type="PIRSF" id="PIRSF005650">
    <property type="entry name" value="Uridylate_kin"/>
    <property type="match status" value="1"/>
</dbReference>
<dbReference type="PRINTS" id="PR00474">
    <property type="entry name" value="GLU5KINASE"/>
</dbReference>
<dbReference type="SUPFAM" id="SSF53633">
    <property type="entry name" value="Carbamate kinase-like"/>
    <property type="match status" value="1"/>
</dbReference>
<organism>
    <name type="scientific">Clostridium perfringens (strain SM101 / Type A)</name>
    <dbReference type="NCBI Taxonomy" id="289380"/>
    <lineage>
        <taxon>Bacteria</taxon>
        <taxon>Bacillati</taxon>
        <taxon>Bacillota</taxon>
        <taxon>Clostridia</taxon>
        <taxon>Eubacteriales</taxon>
        <taxon>Clostridiaceae</taxon>
        <taxon>Clostridium</taxon>
    </lineage>
</organism>
<gene>
    <name evidence="1" type="primary">pyrH</name>
    <name type="ordered locus">CPR_1670</name>
</gene>
<name>PYRH_CLOPS</name>
<evidence type="ECO:0000255" key="1">
    <source>
        <dbReference type="HAMAP-Rule" id="MF_01220"/>
    </source>
</evidence>
<keyword id="KW-0021">Allosteric enzyme</keyword>
<keyword id="KW-0067">ATP-binding</keyword>
<keyword id="KW-0963">Cytoplasm</keyword>
<keyword id="KW-0418">Kinase</keyword>
<keyword id="KW-0547">Nucleotide-binding</keyword>
<keyword id="KW-0665">Pyrimidine biosynthesis</keyword>
<keyword id="KW-0808">Transferase</keyword>
<feature type="chain" id="PRO_1000053915" description="Uridylate kinase">
    <location>
        <begin position="1"/>
        <end position="237"/>
    </location>
</feature>
<feature type="region of interest" description="Involved in allosteric activation by GTP" evidence="1">
    <location>
        <begin position="20"/>
        <end position="25"/>
    </location>
</feature>
<feature type="binding site" evidence="1">
    <location>
        <begin position="12"/>
        <end position="15"/>
    </location>
    <ligand>
        <name>ATP</name>
        <dbReference type="ChEBI" id="CHEBI:30616"/>
    </ligand>
</feature>
<feature type="binding site" evidence="1">
    <location>
        <position position="54"/>
    </location>
    <ligand>
        <name>UMP</name>
        <dbReference type="ChEBI" id="CHEBI:57865"/>
    </ligand>
</feature>
<feature type="binding site" evidence="1">
    <location>
        <position position="55"/>
    </location>
    <ligand>
        <name>ATP</name>
        <dbReference type="ChEBI" id="CHEBI:30616"/>
    </ligand>
</feature>
<feature type="binding site" evidence="1">
    <location>
        <position position="59"/>
    </location>
    <ligand>
        <name>ATP</name>
        <dbReference type="ChEBI" id="CHEBI:30616"/>
    </ligand>
</feature>
<feature type="binding site" evidence="1">
    <location>
        <position position="72"/>
    </location>
    <ligand>
        <name>UMP</name>
        <dbReference type="ChEBI" id="CHEBI:57865"/>
    </ligand>
</feature>
<feature type="binding site" evidence="1">
    <location>
        <begin position="133"/>
        <end position="140"/>
    </location>
    <ligand>
        <name>UMP</name>
        <dbReference type="ChEBI" id="CHEBI:57865"/>
    </ligand>
</feature>
<feature type="binding site" evidence="1">
    <location>
        <position position="166"/>
    </location>
    <ligand>
        <name>ATP</name>
        <dbReference type="ChEBI" id="CHEBI:30616"/>
    </ligand>
</feature>
<feature type="binding site" evidence="1">
    <location>
        <position position="169"/>
    </location>
    <ligand>
        <name>ATP</name>
        <dbReference type="ChEBI" id="CHEBI:30616"/>
    </ligand>
</feature>